<protein>
    <recommendedName>
        <fullName evidence="2">Small ribosomal subunit protein cS23</fullName>
    </recommendedName>
    <alternativeName>
        <fullName>30S ribosomal protein 3, chloroplastic</fullName>
        <shortName>PSRP-3</shortName>
    </alternativeName>
</protein>
<organism>
    <name type="scientific">Cyanidium caldarium</name>
    <name type="common">Red alga</name>
    <dbReference type="NCBI Taxonomy" id="2771"/>
    <lineage>
        <taxon>Eukaryota</taxon>
        <taxon>Rhodophyta</taxon>
        <taxon>Bangiophyceae</taxon>
        <taxon>Cyanidiales</taxon>
        <taxon>Cyanidiaceae</taxon>
        <taxon>Cyanidium</taxon>
    </lineage>
</organism>
<comment type="function">
    <text evidence="1">Probably a ribosomal protein or a ribosome-associated protein.</text>
</comment>
<comment type="subunit">
    <text evidence="1">Part of the 30S ribosomal subunit.</text>
</comment>
<comment type="subcellular location">
    <subcellularLocation>
        <location>Plastid</location>
        <location>Chloroplast</location>
    </subcellularLocation>
</comment>
<comment type="similarity">
    <text evidence="3">Belongs to the chloroplast-specific ribosomal protein cS23 family.</text>
</comment>
<comment type="sequence caution" evidence="3">
    <conflict type="erroneous initiation">
        <sequence resource="EMBL-CDS" id="AAF12967"/>
    </conflict>
    <text>Truncated N-terminus.</text>
</comment>
<feature type="chain" id="PRO_0000216755" description="Small ribosomal subunit protein cS23">
    <location>
        <begin position="1"/>
        <end position="101"/>
    </location>
</feature>
<keyword id="KW-0150">Chloroplast</keyword>
<keyword id="KW-0934">Plastid</keyword>
<keyword id="KW-0687">Ribonucleoprotein</keyword>
<keyword id="KW-0689">Ribosomal protein</keyword>
<gene>
    <name type="primary">ycf65</name>
</gene>
<sequence>MKQYKIKVLWLRNNIAIAVDRLIGDSLFPMTYYYFWPRTDAWEQLKIELDSQPGLFAKDKVVILNQVTRIIDYWQENKKSVFPNLSELQSHFPDLICSGCY</sequence>
<accession>Q9TLZ0</accession>
<geneLocation type="chloroplast"/>
<evidence type="ECO:0000250" key="1"/>
<evidence type="ECO:0000255" key="2">
    <source>
        <dbReference type="HAMAP-Rule" id="MF_00619"/>
    </source>
</evidence>
<evidence type="ECO:0000305" key="3"/>
<dbReference type="EMBL" id="AF022186">
    <property type="protein sequence ID" value="AAF12967.1"/>
    <property type="status" value="ALT_INIT"/>
    <property type="molecule type" value="Genomic_DNA"/>
</dbReference>
<dbReference type="RefSeq" id="NP_045127.1">
    <property type="nucleotide sequence ID" value="NC_001840.1"/>
</dbReference>
<dbReference type="SMR" id="Q9TLZ0"/>
<dbReference type="GeneID" id="800111"/>
<dbReference type="GO" id="GO:0009507">
    <property type="term" value="C:chloroplast"/>
    <property type="evidence" value="ECO:0007669"/>
    <property type="project" value="UniProtKB-SubCell"/>
</dbReference>
<dbReference type="GO" id="GO:1990904">
    <property type="term" value="C:ribonucleoprotein complex"/>
    <property type="evidence" value="ECO:0007669"/>
    <property type="project" value="UniProtKB-KW"/>
</dbReference>
<dbReference type="GO" id="GO:0005840">
    <property type="term" value="C:ribosome"/>
    <property type="evidence" value="ECO:0007669"/>
    <property type="project" value="UniProtKB-KW"/>
</dbReference>
<dbReference type="GO" id="GO:0003735">
    <property type="term" value="F:structural constituent of ribosome"/>
    <property type="evidence" value="ECO:0007669"/>
    <property type="project" value="InterPro"/>
</dbReference>
<dbReference type="GO" id="GO:0006412">
    <property type="term" value="P:translation"/>
    <property type="evidence" value="ECO:0007669"/>
    <property type="project" value="UniProtKB-UniRule"/>
</dbReference>
<dbReference type="Gene3D" id="3.30.390.140">
    <property type="match status" value="1"/>
</dbReference>
<dbReference type="HAMAP" id="MF_00619">
    <property type="entry name" value="Ribosomal_plastid_cS23"/>
    <property type="match status" value="1"/>
</dbReference>
<dbReference type="InterPro" id="IPR038447">
    <property type="entry name" value="PSRP-3/Ycf65_sf"/>
</dbReference>
<dbReference type="InterPro" id="IPR006924">
    <property type="entry name" value="Ribosomal_PSRP3/Ycf65"/>
</dbReference>
<dbReference type="PANTHER" id="PTHR35108">
    <property type="entry name" value="30S RIBOSOMAL PROTEIN 3, CHLOROPLASTIC"/>
    <property type="match status" value="1"/>
</dbReference>
<dbReference type="PANTHER" id="PTHR35108:SF1">
    <property type="entry name" value="OS04G0461100 PROTEIN"/>
    <property type="match status" value="1"/>
</dbReference>
<dbReference type="Pfam" id="PF04839">
    <property type="entry name" value="PSRP-3_Ycf65"/>
    <property type="match status" value="1"/>
</dbReference>
<proteinExistence type="inferred from homology"/>
<name>RRP3_CYACA</name>
<reference key="1">
    <citation type="journal article" date="2000" name="J. Mol. Evol.">
        <title>The structure and gene repertoire of an ancient red algal plastid genome.</title>
        <authorList>
            <person name="Gloeckner G."/>
            <person name="Rosenthal A."/>
            <person name="Valentin K.-U."/>
        </authorList>
    </citation>
    <scope>NUCLEOTIDE SEQUENCE [LARGE SCALE GENOMIC DNA]</scope>
    <source>
        <strain>RK-1</strain>
    </source>
</reference>